<comment type="function">
    <text evidence="2">The carboxylated form is one of the main organic components of the bone matrix, which constitutes 1-2% of the total bone protein (By similarity). The carboxylated form binds strongly to apatite and calcium (By similarity).</text>
</comment>
<comment type="subcellular location">
    <subcellularLocation>
        <location evidence="4">Secreted</location>
    </subcellularLocation>
</comment>
<comment type="PTM">
    <text evidence="3 4">Gamma-carboxyglutamate residues are formed by vitamin K dependent carboxylation by GGCX. These residues are essential for the binding of calcium.</text>
</comment>
<comment type="similarity">
    <text evidence="5">Belongs to the osteocalcin/matrix Gla protein family.</text>
</comment>
<keyword id="KW-0091">Biomineralization</keyword>
<keyword id="KW-0106">Calcium</keyword>
<keyword id="KW-0903">Direct protein sequencing</keyword>
<keyword id="KW-1015">Disulfide bond</keyword>
<keyword id="KW-0301">Gamma-carboxyglutamic acid</keyword>
<keyword id="KW-0372">Hormone</keyword>
<keyword id="KW-0479">Metal-binding</keyword>
<keyword id="KW-0964">Secreted</keyword>
<sequence>SFAVGSSYGAAPDPLEAQREVCELNPDCDELADHIGFQEAYRRFYGPV</sequence>
<reference key="1">
    <citation type="journal article" date="1987" name="Biochem. Int.">
        <title>The amino acid sequence of Emu osteocalcin: gas phase sequencing of Gla-containing proteins.</title>
        <authorList>
            <person name="Huq N.L."/>
            <person name="Tseng A."/>
            <person name="Chapman G.E."/>
        </authorList>
    </citation>
    <scope>PROTEIN SEQUENCE</scope>
    <scope>SUBCELLULAR LOCATION</scope>
    <scope>GAMMA-CARBOXYGLUTAMATION AT GLU-16; GLU-20 AND GLU-23</scope>
</reference>
<evidence type="ECO:0000250" key="1">
    <source>
        <dbReference type="UniProtKB" id="P02820"/>
    </source>
</evidence>
<evidence type="ECO:0000250" key="2">
    <source>
        <dbReference type="UniProtKB" id="P86546"/>
    </source>
</evidence>
<evidence type="ECO:0000255" key="3">
    <source>
        <dbReference type="PROSITE-ProRule" id="PRU00463"/>
    </source>
</evidence>
<evidence type="ECO:0000269" key="4">
    <source>
    </source>
</evidence>
<evidence type="ECO:0000305" key="5"/>
<name>OSTCN_DRONO</name>
<protein>
    <recommendedName>
        <fullName>Osteocalcin</fullName>
    </recommendedName>
    <alternativeName>
        <fullName>Bone Gla protein</fullName>
        <shortName>BGP</shortName>
    </alternativeName>
    <alternativeName>
        <fullName>Gamma-carboxyglutamic acid-containing protein</fullName>
    </alternativeName>
</protein>
<feature type="chain" id="PRO_0000148906" description="Osteocalcin">
    <location>
        <begin position="1"/>
        <end position="48"/>
    </location>
</feature>
<feature type="domain" description="Gla" evidence="3">
    <location>
        <begin position="1"/>
        <end position="46"/>
    </location>
</feature>
<feature type="binding site" evidence="1">
    <location>
        <position position="16"/>
    </location>
    <ligand>
        <name>Ca(2+)</name>
        <dbReference type="ChEBI" id="CHEBI:29108"/>
        <label>1</label>
    </ligand>
</feature>
<feature type="binding site" evidence="1">
    <location>
        <position position="20"/>
    </location>
    <ligand>
        <name>Ca(2+)</name>
        <dbReference type="ChEBI" id="CHEBI:29108"/>
        <label>2</label>
    </ligand>
</feature>
<feature type="binding site" evidence="1">
    <location>
        <position position="23"/>
    </location>
    <ligand>
        <name>Ca(2+)</name>
        <dbReference type="ChEBI" id="CHEBI:29108"/>
        <label>2</label>
    </ligand>
</feature>
<feature type="binding site" evidence="1">
    <location>
        <position position="23"/>
    </location>
    <ligand>
        <name>Ca(2+)</name>
        <dbReference type="ChEBI" id="CHEBI:29108"/>
        <label>3</label>
    </ligand>
</feature>
<feature type="binding site" evidence="1">
    <location>
        <position position="29"/>
    </location>
    <ligand>
        <name>Ca(2+)</name>
        <dbReference type="ChEBI" id="CHEBI:29108"/>
        <label>3</label>
    </ligand>
</feature>
<feature type="modified residue" description="4-carboxyglutamate" evidence="3 4">
    <location>
        <position position="16"/>
    </location>
</feature>
<feature type="modified residue" description="4-carboxyglutamate" evidence="3 4">
    <location>
        <position position="20"/>
    </location>
</feature>
<feature type="modified residue" description="4-carboxyglutamate" evidence="3 4">
    <location>
        <position position="23"/>
    </location>
</feature>
<feature type="disulfide bond" evidence="3">
    <location>
        <begin position="22"/>
        <end position="28"/>
    </location>
</feature>
<dbReference type="PIR" id="S02208">
    <property type="entry name" value="S02208"/>
</dbReference>
<dbReference type="SMR" id="P15504"/>
<dbReference type="Proteomes" id="UP000694423">
    <property type="component" value="Unplaced"/>
</dbReference>
<dbReference type="GO" id="GO:0005576">
    <property type="term" value="C:extracellular region"/>
    <property type="evidence" value="ECO:0007669"/>
    <property type="project" value="UniProtKB-SubCell"/>
</dbReference>
<dbReference type="GO" id="GO:0005509">
    <property type="term" value="F:calcium ion binding"/>
    <property type="evidence" value="ECO:0007669"/>
    <property type="project" value="InterPro"/>
</dbReference>
<dbReference type="GO" id="GO:0005179">
    <property type="term" value="F:hormone activity"/>
    <property type="evidence" value="ECO:0000250"/>
    <property type="project" value="UniProtKB"/>
</dbReference>
<dbReference type="GO" id="GO:0046848">
    <property type="term" value="F:hydroxyapatite binding"/>
    <property type="evidence" value="ECO:0007669"/>
    <property type="project" value="TreeGrafter"/>
</dbReference>
<dbReference type="GO" id="GO:0008147">
    <property type="term" value="F:structural constituent of bone"/>
    <property type="evidence" value="ECO:0000250"/>
    <property type="project" value="UniProtKB"/>
</dbReference>
<dbReference type="GO" id="GO:0031214">
    <property type="term" value="P:biomineral tissue development"/>
    <property type="evidence" value="ECO:0007669"/>
    <property type="project" value="UniProtKB-KW"/>
</dbReference>
<dbReference type="GO" id="GO:0060348">
    <property type="term" value="P:bone development"/>
    <property type="evidence" value="ECO:0007669"/>
    <property type="project" value="InterPro"/>
</dbReference>
<dbReference type="GO" id="GO:0032869">
    <property type="term" value="P:cellular response to insulin stimulus"/>
    <property type="evidence" value="ECO:0000250"/>
    <property type="project" value="UniProtKB"/>
</dbReference>
<dbReference type="GO" id="GO:0042593">
    <property type="term" value="P:glucose homeostasis"/>
    <property type="evidence" value="ECO:0000250"/>
    <property type="project" value="UniProtKB"/>
</dbReference>
<dbReference type="GO" id="GO:1903011">
    <property type="term" value="P:negative regulation of bone development"/>
    <property type="evidence" value="ECO:0000250"/>
    <property type="project" value="UniProtKB"/>
</dbReference>
<dbReference type="GO" id="GO:0001649">
    <property type="term" value="P:osteoblast differentiation"/>
    <property type="evidence" value="ECO:0007669"/>
    <property type="project" value="TreeGrafter"/>
</dbReference>
<dbReference type="GO" id="GO:0030500">
    <property type="term" value="P:regulation of bone mineralization"/>
    <property type="evidence" value="ECO:0007669"/>
    <property type="project" value="InterPro"/>
</dbReference>
<dbReference type="GO" id="GO:1900076">
    <property type="term" value="P:regulation of cellular response to insulin stimulus"/>
    <property type="evidence" value="ECO:0007669"/>
    <property type="project" value="InterPro"/>
</dbReference>
<dbReference type="GO" id="GO:0032571">
    <property type="term" value="P:response to vitamin K"/>
    <property type="evidence" value="ECO:0007669"/>
    <property type="project" value="InterPro"/>
</dbReference>
<dbReference type="GO" id="GO:0044342">
    <property type="term" value="P:type B pancreatic cell proliferation"/>
    <property type="evidence" value="ECO:0000250"/>
    <property type="project" value="UniProtKB"/>
</dbReference>
<dbReference type="InterPro" id="IPR035972">
    <property type="entry name" value="GLA-like_dom_SF"/>
</dbReference>
<dbReference type="InterPro" id="IPR000294">
    <property type="entry name" value="GLA_domain"/>
</dbReference>
<dbReference type="InterPro" id="IPR039176">
    <property type="entry name" value="Osteocalcin"/>
</dbReference>
<dbReference type="InterPro" id="IPR002384">
    <property type="entry name" value="Osteocalcin/MGP"/>
</dbReference>
<dbReference type="PANTHER" id="PTHR14235">
    <property type="entry name" value="OSTEOCALCIN"/>
    <property type="match status" value="1"/>
</dbReference>
<dbReference type="PANTHER" id="PTHR14235:SF0">
    <property type="entry name" value="OSTEOCALCIN"/>
    <property type="match status" value="1"/>
</dbReference>
<dbReference type="PRINTS" id="PR00002">
    <property type="entry name" value="GLABONE"/>
</dbReference>
<dbReference type="SMART" id="SM00069">
    <property type="entry name" value="GLA"/>
    <property type="match status" value="1"/>
</dbReference>
<dbReference type="SUPFAM" id="SSF57630">
    <property type="entry name" value="GLA-domain"/>
    <property type="match status" value="1"/>
</dbReference>
<dbReference type="PROSITE" id="PS00011">
    <property type="entry name" value="GLA_1"/>
    <property type="match status" value="1"/>
</dbReference>
<dbReference type="PROSITE" id="PS50998">
    <property type="entry name" value="GLA_2"/>
    <property type="match status" value="1"/>
</dbReference>
<proteinExistence type="evidence at protein level"/>
<accession>P15504</accession>
<organism>
    <name type="scientific">Dromaius novaehollandiae</name>
    <name type="common">Emu</name>
    <dbReference type="NCBI Taxonomy" id="8790"/>
    <lineage>
        <taxon>Eukaryota</taxon>
        <taxon>Metazoa</taxon>
        <taxon>Chordata</taxon>
        <taxon>Craniata</taxon>
        <taxon>Vertebrata</taxon>
        <taxon>Euteleostomi</taxon>
        <taxon>Archelosauria</taxon>
        <taxon>Archosauria</taxon>
        <taxon>Dinosauria</taxon>
        <taxon>Saurischia</taxon>
        <taxon>Theropoda</taxon>
        <taxon>Coelurosauria</taxon>
        <taxon>Aves</taxon>
        <taxon>Palaeognathae</taxon>
        <taxon>Casuariiformes</taxon>
        <taxon>Dromaiidae</taxon>
        <taxon>Dromaius</taxon>
    </lineage>
</organism>
<gene>
    <name type="primary">BGLAP</name>
</gene>